<feature type="chain" id="PRO_0000086210" description="Ribosomal protein S6 kinase 2 alpha">
    <location>
        <begin position="1"/>
        <end position="752"/>
    </location>
</feature>
<feature type="domain" description="Protein kinase 1" evidence="2">
    <location>
        <begin position="80"/>
        <end position="339"/>
    </location>
</feature>
<feature type="domain" description="AGC-kinase C-terminal" evidence="3">
    <location>
        <begin position="340"/>
        <end position="409"/>
    </location>
</feature>
<feature type="domain" description="Protein kinase 2" evidence="2">
    <location>
        <begin position="435"/>
        <end position="692"/>
    </location>
</feature>
<feature type="active site" description="Proton acceptor" evidence="1">
    <location>
        <position position="205"/>
    </location>
</feature>
<feature type="active site" description="Proton acceptor" evidence="1">
    <location>
        <position position="552"/>
    </location>
</feature>
<feature type="binding site" evidence="2">
    <location>
        <begin position="86"/>
        <end position="94"/>
    </location>
    <ligand>
        <name>ATP</name>
        <dbReference type="ChEBI" id="CHEBI:30616"/>
    </ligand>
</feature>
<feature type="binding site" evidence="2">
    <location>
        <position position="112"/>
    </location>
    <ligand>
        <name>ATP</name>
        <dbReference type="ChEBI" id="CHEBI:30616"/>
    </ligand>
</feature>
<feature type="binding site" evidence="2">
    <location>
        <begin position="441"/>
        <end position="449"/>
    </location>
    <ligand>
        <name>ATP</name>
        <dbReference type="ChEBI" id="CHEBI:30616"/>
    </ligand>
</feature>
<feature type="binding site" evidence="2">
    <location>
        <position position="464"/>
    </location>
    <ligand>
        <name>ATP</name>
        <dbReference type="ChEBI" id="CHEBI:30616"/>
    </ligand>
</feature>
<feature type="modified residue" description="Phosphoserine" evidence="1">
    <location>
        <position position="239"/>
    </location>
</feature>
<feature type="modified residue" description="Phosphothreonine" evidence="1">
    <location>
        <position position="377"/>
    </location>
</feature>
<feature type="modified residue" description="Phosphoserine" evidence="1">
    <location>
        <position position="381"/>
    </location>
</feature>
<feature type="modified residue" description="Phosphoserine; by autocatalysis" evidence="1">
    <location>
        <position position="398"/>
    </location>
</feature>
<feature type="modified residue" description="Phosphothreonine" evidence="1">
    <location>
        <position position="590"/>
    </location>
</feature>
<feature type="modified residue" description="Phosphoserine" evidence="1">
    <location>
        <position position="749"/>
    </location>
</feature>
<name>KS6AA_CHICK</name>
<comment type="function">
    <text evidence="1">Serine/threonine kinase that may play a role in mediating the growth-factor and stress induced activation of transcription.</text>
</comment>
<comment type="catalytic activity">
    <reaction>
        <text>L-seryl-[protein] + ATP = O-phospho-L-seryl-[protein] + ADP + H(+)</text>
        <dbReference type="Rhea" id="RHEA:17989"/>
        <dbReference type="Rhea" id="RHEA-COMP:9863"/>
        <dbReference type="Rhea" id="RHEA-COMP:11604"/>
        <dbReference type="ChEBI" id="CHEBI:15378"/>
        <dbReference type="ChEBI" id="CHEBI:29999"/>
        <dbReference type="ChEBI" id="CHEBI:30616"/>
        <dbReference type="ChEBI" id="CHEBI:83421"/>
        <dbReference type="ChEBI" id="CHEBI:456216"/>
        <dbReference type="EC" id="2.7.11.1"/>
    </reaction>
</comment>
<comment type="catalytic activity">
    <reaction>
        <text>L-threonyl-[protein] + ATP = O-phospho-L-threonyl-[protein] + ADP + H(+)</text>
        <dbReference type="Rhea" id="RHEA:46608"/>
        <dbReference type="Rhea" id="RHEA-COMP:11060"/>
        <dbReference type="Rhea" id="RHEA-COMP:11605"/>
        <dbReference type="ChEBI" id="CHEBI:15378"/>
        <dbReference type="ChEBI" id="CHEBI:30013"/>
        <dbReference type="ChEBI" id="CHEBI:30616"/>
        <dbReference type="ChEBI" id="CHEBI:61977"/>
        <dbReference type="ChEBI" id="CHEBI:456216"/>
        <dbReference type="EC" id="2.7.11.1"/>
    </reaction>
</comment>
<comment type="cofactor">
    <cofactor evidence="1">
        <name>Mg(2+)</name>
        <dbReference type="ChEBI" id="CHEBI:18420"/>
    </cofactor>
</comment>
<comment type="activity regulation">
    <text evidence="1">Activated by multiple phosphorylations on threonine and serine residues.</text>
</comment>
<comment type="tissue specificity">
    <text>Small and large intestine, spleen, stomach, and bursa, and to a lesser extent lung and kidney.</text>
</comment>
<comment type="PTM">
    <text evidence="1">Autophosphorylated on Ser-398, as part of the activation process.</text>
</comment>
<comment type="similarity">
    <text evidence="4">Belongs to the protein kinase superfamily. AGC Ser/Thr protein kinase family. S6 kinase subfamily.</text>
</comment>
<protein>
    <recommendedName>
        <fullName>Ribosomal protein S6 kinase 2 alpha</fullName>
        <ecNumber>2.7.11.1</ecNumber>
    </recommendedName>
    <alternativeName>
        <fullName>MAP kinase-activated protein kinase 1</fullName>
        <shortName>MAPK-activated protein kinase 1</shortName>
        <shortName>MAPKAP kinase 1</shortName>
        <shortName>MAPKAPK-1</shortName>
    </alternativeName>
    <alternativeName>
        <fullName>Ribosomal protein S6 kinase II alpha</fullName>
        <shortName>S6KII-alpha</shortName>
    </alternativeName>
    <alternativeName>
        <fullName>p90-RSK</fullName>
    </alternativeName>
</protein>
<dbReference type="EC" id="2.7.11.1"/>
<dbReference type="EMBL" id="M28488">
    <property type="protein sequence ID" value="AAA21877.1"/>
    <property type="molecule type" value="mRNA"/>
</dbReference>
<dbReference type="PIR" id="A32571">
    <property type="entry name" value="A32571"/>
</dbReference>
<dbReference type="RefSeq" id="NP_001103241.1">
    <property type="nucleotide sequence ID" value="NM_001109771.2"/>
</dbReference>
<dbReference type="SMR" id="P18652"/>
<dbReference type="BioGRID" id="675357">
    <property type="interactions" value="1"/>
</dbReference>
<dbReference type="ELM" id="P18652"/>
<dbReference type="FunCoup" id="P18652">
    <property type="interactions" value="696"/>
</dbReference>
<dbReference type="STRING" id="9031.ENSGALP00000050392"/>
<dbReference type="iPTMnet" id="P18652"/>
<dbReference type="PaxDb" id="9031-ENSGALP00000000497"/>
<dbReference type="GeneID" id="386579"/>
<dbReference type="KEGG" id="gga:386579"/>
<dbReference type="CTD" id="6195"/>
<dbReference type="VEuPathDB" id="HostDB:geneid_386579"/>
<dbReference type="eggNOG" id="KOG0603">
    <property type="taxonomic scope" value="Eukaryota"/>
</dbReference>
<dbReference type="HOGENOM" id="CLU_000288_58_3_1"/>
<dbReference type="InParanoid" id="P18652"/>
<dbReference type="OMA" id="ILEHSWV"/>
<dbReference type="OrthoDB" id="63267at2759"/>
<dbReference type="PhylomeDB" id="P18652"/>
<dbReference type="BRENDA" id="2.7.11.1">
    <property type="organism ID" value="1306"/>
</dbReference>
<dbReference type="Reactome" id="R-GGA-198753">
    <property type="pathway name" value="ERK/MAPK targets"/>
</dbReference>
<dbReference type="Reactome" id="R-GGA-199920">
    <property type="pathway name" value="CREB phosphorylation"/>
</dbReference>
<dbReference type="Reactome" id="R-GGA-2559582">
    <property type="pathway name" value="Senescence-Associated Secretory Phenotype (SASP)"/>
</dbReference>
<dbReference type="Reactome" id="R-GGA-442742">
    <property type="pathway name" value="CREB1 phosphorylation through NMDA receptor-mediated activation of RAS signaling"/>
</dbReference>
<dbReference type="Reactome" id="R-GGA-444257">
    <property type="pathway name" value="RSK activation"/>
</dbReference>
<dbReference type="Reactome" id="R-GGA-881907">
    <property type="pathway name" value="Gastrin-CREB signalling pathway via PKC and MAPK"/>
</dbReference>
<dbReference type="Reactome" id="R-GGA-9856649">
    <property type="pathway name" value="Transcriptional and post-translational regulation of MITF-M expression and activity"/>
</dbReference>
<dbReference type="PRO" id="PR:P18652"/>
<dbReference type="Proteomes" id="UP000000539">
    <property type="component" value="Chromosome 23"/>
</dbReference>
<dbReference type="Bgee" id="ENSGALG00000037136">
    <property type="expression patterns" value="Expressed in colon and 12 other cell types or tissues"/>
</dbReference>
<dbReference type="GO" id="GO:0005737">
    <property type="term" value="C:cytoplasm"/>
    <property type="evidence" value="ECO:0000318"/>
    <property type="project" value="GO_Central"/>
</dbReference>
<dbReference type="GO" id="GO:0005654">
    <property type="term" value="C:nucleoplasm"/>
    <property type="evidence" value="ECO:0000318"/>
    <property type="project" value="GO_Central"/>
</dbReference>
<dbReference type="GO" id="GO:0005524">
    <property type="term" value="F:ATP binding"/>
    <property type="evidence" value="ECO:0007669"/>
    <property type="project" value="UniProtKB-KW"/>
</dbReference>
<dbReference type="GO" id="GO:0000287">
    <property type="term" value="F:magnesium ion binding"/>
    <property type="evidence" value="ECO:0007669"/>
    <property type="project" value="InterPro"/>
</dbReference>
<dbReference type="GO" id="GO:0106310">
    <property type="term" value="F:protein serine kinase activity"/>
    <property type="evidence" value="ECO:0007669"/>
    <property type="project" value="RHEA"/>
</dbReference>
<dbReference type="GO" id="GO:0004711">
    <property type="term" value="F:ribosomal protein S6 kinase activity"/>
    <property type="evidence" value="ECO:0000318"/>
    <property type="project" value="GO_Central"/>
</dbReference>
<dbReference type="GO" id="GO:0045893">
    <property type="term" value="P:positive regulation of DNA-templated transcription"/>
    <property type="evidence" value="ECO:0000318"/>
    <property type="project" value="GO_Central"/>
</dbReference>
<dbReference type="GO" id="GO:0038202">
    <property type="term" value="P:TORC1 signaling"/>
    <property type="evidence" value="ECO:0000318"/>
    <property type="project" value="GO_Central"/>
</dbReference>
<dbReference type="CDD" id="cd14175">
    <property type="entry name" value="STKc_RSK1_C"/>
    <property type="match status" value="1"/>
</dbReference>
<dbReference type="CDD" id="cd05582">
    <property type="entry name" value="STKc_RSK_N"/>
    <property type="match status" value="1"/>
</dbReference>
<dbReference type="FunFam" id="1.10.510.10:FF:000010">
    <property type="entry name" value="Ribosomal protein S6 kinase"/>
    <property type="match status" value="1"/>
</dbReference>
<dbReference type="FunFam" id="1.10.510.10:FF:000041">
    <property type="entry name" value="Ribosomal protein S6 kinase"/>
    <property type="match status" value="1"/>
</dbReference>
<dbReference type="FunFam" id="3.30.200.20:FF:000013">
    <property type="entry name" value="Ribosomal protein S6 kinase"/>
    <property type="match status" value="1"/>
</dbReference>
<dbReference type="FunFam" id="3.30.200.20:FF:000121">
    <property type="entry name" value="Ribosomal protein S6 kinase"/>
    <property type="match status" value="1"/>
</dbReference>
<dbReference type="Gene3D" id="3.30.200.20">
    <property type="entry name" value="Phosphorylase Kinase, domain 1"/>
    <property type="match status" value="2"/>
</dbReference>
<dbReference type="Gene3D" id="1.10.510.10">
    <property type="entry name" value="Transferase(Phosphotransferase) domain 1"/>
    <property type="match status" value="2"/>
</dbReference>
<dbReference type="InterPro" id="IPR000961">
    <property type="entry name" value="AGC-kinase_C"/>
</dbReference>
<dbReference type="InterPro" id="IPR011009">
    <property type="entry name" value="Kinase-like_dom_sf"/>
</dbReference>
<dbReference type="InterPro" id="IPR017892">
    <property type="entry name" value="Pkinase_C"/>
</dbReference>
<dbReference type="InterPro" id="IPR000719">
    <property type="entry name" value="Prot_kinase_dom"/>
</dbReference>
<dbReference type="InterPro" id="IPR017441">
    <property type="entry name" value="Protein_kinase_ATP_BS"/>
</dbReference>
<dbReference type="InterPro" id="IPR016239">
    <property type="entry name" value="Ribosomal_S6_kinase_II"/>
</dbReference>
<dbReference type="InterPro" id="IPR041906">
    <property type="entry name" value="RSK_N"/>
</dbReference>
<dbReference type="InterPro" id="IPR008271">
    <property type="entry name" value="Ser/Thr_kinase_AS"/>
</dbReference>
<dbReference type="PANTHER" id="PTHR24351">
    <property type="entry name" value="RIBOSOMAL PROTEIN S6 KINASE"/>
    <property type="match status" value="1"/>
</dbReference>
<dbReference type="Pfam" id="PF00069">
    <property type="entry name" value="Pkinase"/>
    <property type="match status" value="2"/>
</dbReference>
<dbReference type="Pfam" id="PF00433">
    <property type="entry name" value="Pkinase_C"/>
    <property type="match status" value="1"/>
</dbReference>
<dbReference type="PIRSF" id="PIRSF000606">
    <property type="entry name" value="Ribsml_S6_kin_2"/>
    <property type="match status" value="1"/>
</dbReference>
<dbReference type="SMART" id="SM00133">
    <property type="entry name" value="S_TK_X"/>
    <property type="match status" value="1"/>
</dbReference>
<dbReference type="SMART" id="SM00220">
    <property type="entry name" value="S_TKc"/>
    <property type="match status" value="2"/>
</dbReference>
<dbReference type="SUPFAM" id="SSF56112">
    <property type="entry name" value="Protein kinase-like (PK-like)"/>
    <property type="match status" value="2"/>
</dbReference>
<dbReference type="PROSITE" id="PS51285">
    <property type="entry name" value="AGC_KINASE_CTER"/>
    <property type="match status" value="1"/>
</dbReference>
<dbReference type="PROSITE" id="PS00107">
    <property type="entry name" value="PROTEIN_KINASE_ATP"/>
    <property type="match status" value="2"/>
</dbReference>
<dbReference type="PROSITE" id="PS50011">
    <property type="entry name" value="PROTEIN_KINASE_DOM"/>
    <property type="match status" value="2"/>
</dbReference>
<dbReference type="PROSITE" id="PS00108">
    <property type="entry name" value="PROTEIN_KINASE_ST"/>
    <property type="match status" value="2"/>
</dbReference>
<sequence>MPLAQLAEPWPNMELVQLDTENGQAAPEEGGNPPCKAKSDITWVEKDLVDSTDKGEGVVKEINITHHVKEGSEKADPSQFELLKVLGQGSFGKVFLVRKITPPDSNHLYAMKVLKKATLKVRDRVRTKIERDILADVNHPFVVKLHYAFQTEGKLYLILDFLRGGDLFTRLSKEVMFTEEDVKFYLAELALGLDHLHSLGIIYRDLKPENILLDEEGHIKLTDFGLSKEAIDHEKKAYSFCGTVEYMAPEVVNRQGHSHSADWWSYGVLMFEMLTGSLPFQGKDRKETMTLILKAKLGMPQFLSAEAQSLLRALFKRNPANRLGSGPDGAEEIKRHPFYSTIDWNKLYRREIKPPFKPAVGQPDDTFYFDTEFTSRTPKDSPGIPPSAGAHQLFRGFSFVATGLMEDSKVKPAQPPLHSVVQQLHGKNIQFSDGYVVKEAIGVGSYSVCKRCIHKTTNMEYAVKVIDKSKRDPSEEIEILLRYGQHPNIITLKDVYDDGKYVYLVTELMRGGELLDKILRQKFFSEREASSVLHTICKTVEYLHSQGVVHRDLKPSNILYVDESGNPESIRICDFGFAKQLRAENGLLMTPCYTANFVAPEVLKRQGYDEGCDIWSLGVLLYTMLAGCTPFANGPSDTPEEILTRIGGGKFSVNGGNWDTISDVAKDLVSKMLHVDPHQRLTAKQVLQHPWITQKDSLPQSQLNYQDVQLVKGAMAATYSALNSSKPSPQLKPIESSILAQRRVKKLPSTTL</sequence>
<gene>
    <name type="primary">RPS6KA</name>
    <name type="synonym">RSK</name>
</gene>
<reference key="1">
    <citation type="journal article" date="1989" name="Mol. Cell. Biol.">
        <title>Sequence and expression of chicken and mouse rsk: homologs of Xenopus laevis ribosomal S6 kinase.</title>
        <authorList>
            <person name="Alcorta D.A."/>
            <person name="Crews C.M."/>
            <person name="Sweet L.J."/>
            <person name="Bankston L."/>
            <person name="Jones S.W."/>
            <person name="Erikson R.L."/>
        </authorList>
    </citation>
    <scope>NUCLEOTIDE SEQUENCE [MRNA]</scope>
</reference>
<evidence type="ECO:0000250" key="1"/>
<evidence type="ECO:0000255" key="2">
    <source>
        <dbReference type="PROSITE-ProRule" id="PRU00159"/>
    </source>
</evidence>
<evidence type="ECO:0000255" key="3">
    <source>
        <dbReference type="PROSITE-ProRule" id="PRU00618"/>
    </source>
</evidence>
<evidence type="ECO:0000305" key="4"/>
<keyword id="KW-0067">ATP-binding</keyword>
<keyword id="KW-0418">Kinase</keyword>
<keyword id="KW-0547">Nucleotide-binding</keyword>
<keyword id="KW-0597">Phosphoprotein</keyword>
<keyword id="KW-1185">Reference proteome</keyword>
<keyword id="KW-0677">Repeat</keyword>
<keyword id="KW-0723">Serine/threonine-protein kinase</keyword>
<keyword id="KW-0808">Transferase</keyword>
<accession>P18652</accession>
<organism>
    <name type="scientific">Gallus gallus</name>
    <name type="common">Chicken</name>
    <dbReference type="NCBI Taxonomy" id="9031"/>
    <lineage>
        <taxon>Eukaryota</taxon>
        <taxon>Metazoa</taxon>
        <taxon>Chordata</taxon>
        <taxon>Craniata</taxon>
        <taxon>Vertebrata</taxon>
        <taxon>Euteleostomi</taxon>
        <taxon>Archelosauria</taxon>
        <taxon>Archosauria</taxon>
        <taxon>Dinosauria</taxon>
        <taxon>Saurischia</taxon>
        <taxon>Theropoda</taxon>
        <taxon>Coelurosauria</taxon>
        <taxon>Aves</taxon>
        <taxon>Neognathae</taxon>
        <taxon>Galloanserae</taxon>
        <taxon>Galliformes</taxon>
        <taxon>Phasianidae</taxon>
        <taxon>Phasianinae</taxon>
        <taxon>Gallus</taxon>
    </lineage>
</organism>
<proteinExistence type="evidence at transcript level"/>